<reference key="1">
    <citation type="journal article" date="2003" name="Genome Res.">
        <title>Genome sequence of an M3 strain of Streptococcus pyogenes reveals a large-scale genomic rearrangement in invasive strains and new insights into phage evolution.</title>
        <authorList>
            <person name="Nakagawa I."/>
            <person name="Kurokawa K."/>
            <person name="Yamashita A."/>
            <person name="Nakata M."/>
            <person name="Tomiyasu Y."/>
            <person name="Okahashi N."/>
            <person name="Kawabata S."/>
            <person name="Yamazaki K."/>
            <person name="Shiba T."/>
            <person name="Yasunaga T."/>
            <person name="Hayashi H."/>
            <person name="Hattori M."/>
            <person name="Hamada S."/>
        </authorList>
    </citation>
    <scope>NUCLEOTIDE SEQUENCE [LARGE SCALE GENOMIC DNA]</scope>
    <source>
        <strain>SSI-1</strain>
    </source>
</reference>
<gene>
    <name evidence="1" type="primary">potA</name>
    <name type="ordered locus">SPs0964</name>
</gene>
<name>POTA_STRPQ</name>
<evidence type="ECO:0000255" key="1">
    <source>
        <dbReference type="HAMAP-Rule" id="MF_01726"/>
    </source>
</evidence>
<organism>
    <name type="scientific">Streptococcus pyogenes serotype M3 (strain SSI-1)</name>
    <dbReference type="NCBI Taxonomy" id="193567"/>
    <lineage>
        <taxon>Bacteria</taxon>
        <taxon>Bacillati</taxon>
        <taxon>Bacillota</taxon>
        <taxon>Bacilli</taxon>
        <taxon>Lactobacillales</taxon>
        <taxon>Streptococcaceae</taxon>
        <taxon>Streptococcus</taxon>
    </lineage>
</organism>
<feature type="chain" id="PRO_0000411255" description="Spermidine/putrescine import ATP-binding protein PotA">
    <location>
        <begin position="1"/>
        <end position="384"/>
    </location>
</feature>
<feature type="domain" description="ABC transporter" evidence="1">
    <location>
        <begin position="6"/>
        <end position="238"/>
    </location>
</feature>
<feature type="binding site" evidence="1">
    <location>
        <begin position="40"/>
        <end position="47"/>
    </location>
    <ligand>
        <name>ATP</name>
        <dbReference type="ChEBI" id="CHEBI:30616"/>
    </ligand>
</feature>
<sequence length="384" mass="43824">MTKPIITFNNVSKTFEDSGTQVLKNINFDLEEGKFYTLLGASGSGKSTILNIMAGLLDASSGDIYLDGERINDLPINKRDIHTVFQNYALFPHMTVFENVAFALKLKKVDKKEIAKRVKETLKMVQLEGYENRSIQKLSGGQRQRVAIARAIINQPRVVLLDEPLSALDLKLRTEMQYELRELQQRLGITFVFVTHDQEEALAMSDWVFVMNEGEIVQSGTPVDIYDEPINHFVANFIGESNIINGTMIEDYLVSFNGKEFESVDGGMRPNEPVEVVIRPEDLQITLPEEGKLQVKVDTQLFRGVHYEIIAYDELGNEWMIHSTRKAIEGEVIGLDFTPEDLHIMRLNETEEEFDARIEEYVEMDEPEDGLINAIEEERNEENL</sequence>
<proteinExistence type="inferred from homology"/>
<keyword id="KW-0067">ATP-binding</keyword>
<keyword id="KW-1003">Cell membrane</keyword>
<keyword id="KW-0472">Membrane</keyword>
<keyword id="KW-0547">Nucleotide-binding</keyword>
<keyword id="KW-1278">Translocase</keyword>
<keyword id="KW-0813">Transport</keyword>
<protein>
    <recommendedName>
        <fullName evidence="1">Spermidine/putrescine import ATP-binding protein PotA</fullName>
        <ecNumber evidence="1">7.6.2.11</ecNumber>
    </recommendedName>
</protein>
<accession>P0CZ35</accession>
<accession>Q79X98</accession>
<accession>Q8K7K4</accession>
<dbReference type="EC" id="7.6.2.11" evidence="1"/>
<dbReference type="EMBL" id="BA000034">
    <property type="protein sequence ID" value="BAC64059.1"/>
    <property type="molecule type" value="Genomic_DNA"/>
</dbReference>
<dbReference type="RefSeq" id="WP_002984745.1">
    <property type="nucleotide sequence ID" value="NC_004606.1"/>
</dbReference>
<dbReference type="SMR" id="P0CZ35"/>
<dbReference type="KEGG" id="sps:SPs0964"/>
<dbReference type="HOGENOM" id="CLU_000604_1_1_9"/>
<dbReference type="GO" id="GO:0043190">
    <property type="term" value="C:ATP-binding cassette (ABC) transporter complex"/>
    <property type="evidence" value="ECO:0007669"/>
    <property type="project" value="InterPro"/>
</dbReference>
<dbReference type="GO" id="GO:0015417">
    <property type="term" value="F:ABC-type polyamine transporter activity"/>
    <property type="evidence" value="ECO:0007669"/>
    <property type="project" value="UniProtKB-EC"/>
</dbReference>
<dbReference type="GO" id="GO:0005524">
    <property type="term" value="F:ATP binding"/>
    <property type="evidence" value="ECO:0007669"/>
    <property type="project" value="UniProtKB-KW"/>
</dbReference>
<dbReference type="GO" id="GO:0016887">
    <property type="term" value="F:ATP hydrolysis activity"/>
    <property type="evidence" value="ECO:0007669"/>
    <property type="project" value="InterPro"/>
</dbReference>
<dbReference type="FunFam" id="3.40.50.300:FF:000042">
    <property type="entry name" value="Maltose/maltodextrin ABC transporter, ATP-binding protein"/>
    <property type="match status" value="1"/>
</dbReference>
<dbReference type="Gene3D" id="2.40.50.100">
    <property type="match status" value="1"/>
</dbReference>
<dbReference type="Gene3D" id="3.40.50.300">
    <property type="entry name" value="P-loop containing nucleotide triphosphate hydrolases"/>
    <property type="match status" value="1"/>
</dbReference>
<dbReference type="InterPro" id="IPR003593">
    <property type="entry name" value="AAA+_ATPase"/>
</dbReference>
<dbReference type="InterPro" id="IPR050093">
    <property type="entry name" value="ABC_SmlMolc_Importer"/>
</dbReference>
<dbReference type="InterPro" id="IPR003439">
    <property type="entry name" value="ABC_transporter-like_ATP-bd"/>
</dbReference>
<dbReference type="InterPro" id="IPR017871">
    <property type="entry name" value="ABC_transporter-like_CS"/>
</dbReference>
<dbReference type="InterPro" id="IPR008995">
    <property type="entry name" value="Mo/tungstate-bd_C_term_dom"/>
</dbReference>
<dbReference type="InterPro" id="IPR027417">
    <property type="entry name" value="P-loop_NTPase"/>
</dbReference>
<dbReference type="InterPro" id="IPR005893">
    <property type="entry name" value="PotA-like"/>
</dbReference>
<dbReference type="InterPro" id="IPR013611">
    <property type="entry name" value="Transp-assoc_OB_typ2"/>
</dbReference>
<dbReference type="NCBIfam" id="TIGR01187">
    <property type="entry name" value="potA"/>
    <property type="match status" value="1"/>
</dbReference>
<dbReference type="PANTHER" id="PTHR42781">
    <property type="entry name" value="SPERMIDINE/PUTRESCINE IMPORT ATP-BINDING PROTEIN POTA"/>
    <property type="match status" value="1"/>
</dbReference>
<dbReference type="PANTHER" id="PTHR42781:SF4">
    <property type="entry name" value="SPERMIDINE_PUTRESCINE IMPORT ATP-BINDING PROTEIN POTA"/>
    <property type="match status" value="1"/>
</dbReference>
<dbReference type="Pfam" id="PF00005">
    <property type="entry name" value="ABC_tran"/>
    <property type="match status" value="1"/>
</dbReference>
<dbReference type="Pfam" id="PF08402">
    <property type="entry name" value="TOBE_2"/>
    <property type="match status" value="1"/>
</dbReference>
<dbReference type="SMART" id="SM00382">
    <property type="entry name" value="AAA"/>
    <property type="match status" value="1"/>
</dbReference>
<dbReference type="SUPFAM" id="SSF50331">
    <property type="entry name" value="MOP-like"/>
    <property type="match status" value="1"/>
</dbReference>
<dbReference type="SUPFAM" id="SSF52540">
    <property type="entry name" value="P-loop containing nucleoside triphosphate hydrolases"/>
    <property type="match status" value="1"/>
</dbReference>
<dbReference type="PROSITE" id="PS00211">
    <property type="entry name" value="ABC_TRANSPORTER_1"/>
    <property type="match status" value="1"/>
</dbReference>
<dbReference type="PROSITE" id="PS50893">
    <property type="entry name" value="ABC_TRANSPORTER_2"/>
    <property type="match status" value="1"/>
</dbReference>
<dbReference type="PROSITE" id="PS51305">
    <property type="entry name" value="POTA"/>
    <property type="match status" value="1"/>
</dbReference>
<comment type="function">
    <text evidence="1">Part of the ABC transporter complex PotABCD involved in spermidine/putrescine import. Responsible for energy coupling to the transport system.</text>
</comment>
<comment type="catalytic activity">
    <reaction evidence="1">
        <text>ATP + H2O + polyamine-[polyamine-binding protein]Side 1 = ADP + phosphate + polyamineSide 2 + [polyamine-binding protein]Side 1.</text>
        <dbReference type="EC" id="7.6.2.11"/>
    </reaction>
</comment>
<comment type="subunit">
    <text evidence="1">The complex is composed of two ATP-binding proteins (PotA), two transmembrane proteins (PotB and PotC) and a solute-binding protein (PotD).</text>
</comment>
<comment type="subcellular location">
    <subcellularLocation>
        <location evidence="1">Cell membrane</location>
        <topology evidence="1">Peripheral membrane protein</topology>
    </subcellularLocation>
</comment>
<comment type="similarity">
    <text evidence="1">Belongs to the ABC transporter superfamily. Spermidine/putrescine importer (TC 3.A.1.11.1) family.</text>
</comment>